<evidence type="ECO:0000250" key="1">
    <source>
        <dbReference type="UniProtKB" id="P17256"/>
    </source>
</evidence>
<evidence type="ECO:0000250" key="2">
    <source>
        <dbReference type="UniProtKB" id="Q03426"/>
    </source>
</evidence>
<evidence type="ECO:0000269" key="3">
    <source>
    </source>
</evidence>
<evidence type="ECO:0000269" key="4">
    <source>
    </source>
</evidence>
<evidence type="ECO:0000303" key="5">
    <source>
    </source>
</evidence>
<evidence type="ECO:0000303" key="6">
    <source>
    </source>
</evidence>
<evidence type="ECO:0000303" key="7">
    <source>
    </source>
</evidence>
<evidence type="ECO:0000305" key="8"/>
<evidence type="ECO:0000305" key="9">
    <source>
    </source>
</evidence>
<protein>
    <recommendedName>
        <fullName evidence="5">Mevalonate kinase</fullName>
        <shortName evidence="5">MK</shortName>
        <shortName evidence="5">MvK</shortName>
        <ecNumber evidence="4">2.7.1.36</ecNumber>
    </recommendedName>
    <alternativeName>
        <fullName evidence="5">Ergosterol biosynthesis protein 12</fullName>
    </alternativeName>
    <alternativeName>
        <fullName evidence="7">Regulation of autonomous replication protein 1</fullName>
    </alternativeName>
</protein>
<organism>
    <name type="scientific">Saccharomyces cerevisiae (strain ATCC 204508 / S288c)</name>
    <name type="common">Baker's yeast</name>
    <dbReference type="NCBI Taxonomy" id="559292"/>
    <lineage>
        <taxon>Eukaryota</taxon>
        <taxon>Fungi</taxon>
        <taxon>Dikarya</taxon>
        <taxon>Ascomycota</taxon>
        <taxon>Saccharomycotina</taxon>
        <taxon>Saccharomycetes</taxon>
        <taxon>Saccharomycetales</taxon>
        <taxon>Saccharomycetaceae</taxon>
        <taxon>Saccharomyces</taxon>
    </lineage>
</organism>
<dbReference type="EC" id="2.7.1.36" evidence="4"/>
<dbReference type="EMBL" id="X06114">
    <property type="protein sequence ID" value="CAA29487.1"/>
    <property type="molecule type" value="Genomic_DNA"/>
</dbReference>
<dbReference type="EMBL" id="X55875">
    <property type="protein sequence ID" value="CAA39359.1"/>
    <property type="molecule type" value="Genomic_DNA"/>
</dbReference>
<dbReference type="EMBL" id="Z49809">
    <property type="protein sequence ID" value="CAA89923.1"/>
    <property type="molecule type" value="Genomic_DNA"/>
</dbReference>
<dbReference type="EMBL" id="D78165">
    <property type="protein sequence ID" value="BAA24409.1"/>
    <property type="molecule type" value="Genomic_DNA"/>
</dbReference>
<dbReference type="EMBL" id="BK006946">
    <property type="protein sequence ID" value="DAA10107.1"/>
    <property type="molecule type" value="Genomic_DNA"/>
</dbReference>
<dbReference type="PIR" id="S05875">
    <property type="entry name" value="BVBYR1"/>
</dbReference>
<dbReference type="RefSeq" id="NP_013935.1">
    <property type="nucleotide sequence ID" value="NM_001182715.1"/>
</dbReference>
<dbReference type="SMR" id="P07277"/>
<dbReference type="BioGRID" id="35386">
    <property type="interactions" value="100"/>
</dbReference>
<dbReference type="FunCoup" id="P07277">
    <property type="interactions" value="543"/>
</dbReference>
<dbReference type="IntAct" id="P07277">
    <property type="interactions" value="3"/>
</dbReference>
<dbReference type="STRING" id="4932.YMR208W"/>
<dbReference type="iPTMnet" id="P07277"/>
<dbReference type="PaxDb" id="4932-YMR208W"/>
<dbReference type="PeptideAtlas" id="P07277"/>
<dbReference type="EnsemblFungi" id="YMR208W_mRNA">
    <property type="protein sequence ID" value="YMR208W"/>
    <property type="gene ID" value="YMR208W"/>
</dbReference>
<dbReference type="GeneID" id="855248"/>
<dbReference type="KEGG" id="sce:YMR208W"/>
<dbReference type="AGR" id="SGD:S000004821"/>
<dbReference type="SGD" id="S000004821">
    <property type="gene designation" value="ERG12"/>
</dbReference>
<dbReference type="VEuPathDB" id="FungiDB:YMR208W"/>
<dbReference type="eggNOG" id="KOG1511">
    <property type="taxonomic scope" value="Eukaryota"/>
</dbReference>
<dbReference type="GeneTree" id="ENSGT00950000183187"/>
<dbReference type="HOGENOM" id="CLU_017814_0_1_1"/>
<dbReference type="InParanoid" id="P07277"/>
<dbReference type="OMA" id="LMDFNHG"/>
<dbReference type="OrthoDB" id="1652964at2759"/>
<dbReference type="BioCyc" id="MetaCyc:YMR208W-MONOMER"/>
<dbReference type="BioCyc" id="YEAST:YMR208W-MONOMER"/>
<dbReference type="Reactome" id="R-SCE-191273">
    <property type="pathway name" value="Cholesterol biosynthesis"/>
</dbReference>
<dbReference type="UniPathway" id="UPA00057">
    <property type="reaction ID" value="UER00098"/>
</dbReference>
<dbReference type="BioGRID-ORCS" id="855248">
    <property type="hits" value="6 hits in 10 CRISPR screens"/>
</dbReference>
<dbReference type="ChiTaRS" id="ERG12">
    <property type="organism name" value="yeast"/>
</dbReference>
<dbReference type="PRO" id="PR:P07277"/>
<dbReference type="Proteomes" id="UP000002311">
    <property type="component" value="Chromosome XIII"/>
</dbReference>
<dbReference type="RNAct" id="P07277">
    <property type="molecule type" value="protein"/>
</dbReference>
<dbReference type="GO" id="GO:0005737">
    <property type="term" value="C:cytoplasm"/>
    <property type="evidence" value="ECO:0007005"/>
    <property type="project" value="SGD"/>
</dbReference>
<dbReference type="GO" id="GO:0005829">
    <property type="term" value="C:cytosol"/>
    <property type="evidence" value="ECO:0007005"/>
    <property type="project" value="SGD"/>
</dbReference>
<dbReference type="GO" id="GO:0005634">
    <property type="term" value="C:nucleus"/>
    <property type="evidence" value="ECO:0007005"/>
    <property type="project" value="SGD"/>
</dbReference>
<dbReference type="GO" id="GO:0005524">
    <property type="term" value="F:ATP binding"/>
    <property type="evidence" value="ECO:0000250"/>
    <property type="project" value="UniProtKB"/>
</dbReference>
<dbReference type="GO" id="GO:0000287">
    <property type="term" value="F:magnesium ion binding"/>
    <property type="evidence" value="ECO:0000250"/>
    <property type="project" value="UniProtKB"/>
</dbReference>
<dbReference type="GO" id="GO:0004496">
    <property type="term" value="F:mevalonate kinase activity"/>
    <property type="evidence" value="ECO:0000314"/>
    <property type="project" value="UniProt"/>
</dbReference>
<dbReference type="GO" id="GO:0006696">
    <property type="term" value="P:ergosterol biosynthetic process"/>
    <property type="evidence" value="ECO:0000314"/>
    <property type="project" value="UniProt"/>
</dbReference>
<dbReference type="GO" id="GO:0010142">
    <property type="term" value="P:farnesyl diphosphate biosynthetic process, mevalonate pathway"/>
    <property type="evidence" value="ECO:0000315"/>
    <property type="project" value="SGD"/>
</dbReference>
<dbReference type="GO" id="GO:0019287">
    <property type="term" value="P:isopentenyl diphosphate biosynthetic process, mevalonate pathway"/>
    <property type="evidence" value="ECO:0000315"/>
    <property type="project" value="SGD"/>
</dbReference>
<dbReference type="FunFam" id="3.30.230.10:FF:000027">
    <property type="entry name" value="Mevalonate kinase"/>
    <property type="match status" value="1"/>
</dbReference>
<dbReference type="FunFam" id="3.30.70.890:FF:000003">
    <property type="entry name" value="Mevalonate kinase"/>
    <property type="match status" value="1"/>
</dbReference>
<dbReference type="Gene3D" id="3.30.230.10">
    <property type="match status" value="1"/>
</dbReference>
<dbReference type="Gene3D" id="3.30.70.890">
    <property type="entry name" value="GHMP kinase, C-terminal domain"/>
    <property type="match status" value="1"/>
</dbReference>
<dbReference type="InterPro" id="IPR036554">
    <property type="entry name" value="GHMP_kinase_C_sf"/>
</dbReference>
<dbReference type="InterPro" id="IPR006204">
    <property type="entry name" value="GHMP_kinase_N_dom"/>
</dbReference>
<dbReference type="InterPro" id="IPR006203">
    <property type="entry name" value="GHMP_knse_ATP-bd_CS"/>
</dbReference>
<dbReference type="InterPro" id="IPR006205">
    <property type="entry name" value="Mev_gal_kin"/>
</dbReference>
<dbReference type="InterPro" id="IPR020568">
    <property type="entry name" value="Ribosomal_Su5_D2-typ_SF"/>
</dbReference>
<dbReference type="InterPro" id="IPR014721">
    <property type="entry name" value="Ribsml_uS5_D2-typ_fold_subgr"/>
</dbReference>
<dbReference type="NCBIfam" id="TIGR00549">
    <property type="entry name" value="mevalon_kin"/>
    <property type="match status" value="1"/>
</dbReference>
<dbReference type="PANTHER" id="PTHR43290">
    <property type="entry name" value="MEVALONATE KINASE"/>
    <property type="match status" value="1"/>
</dbReference>
<dbReference type="PANTHER" id="PTHR43290:SF2">
    <property type="entry name" value="MEVALONATE KINASE"/>
    <property type="match status" value="1"/>
</dbReference>
<dbReference type="Pfam" id="PF00288">
    <property type="entry name" value="GHMP_kinases_N"/>
    <property type="match status" value="1"/>
</dbReference>
<dbReference type="PRINTS" id="PR00959">
    <property type="entry name" value="MEVGALKINASE"/>
</dbReference>
<dbReference type="SUPFAM" id="SSF55060">
    <property type="entry name" value="GHMP Kinase, C-terminal domain"/>
    <property type="match status" value="1"/>
</dbReference>
<dbReference type="SUPFAM" id="SSF54211">
    <property type="entry name" value="Ribosomal protein S5 domain 2-like"/>
    <property type="match status" value="1"/>
</dbReference>
<dbReference type="PROSITE" id="PS00627">
    <property type="entry name" value="GHMP_KINASES_ATP"/>
    <property type="match status" value="1"/>
</dbReference>
<comment type="function">
    <text evidence="4 6">Mevalonate kinase; part of the second module of ergosterol biosynthesis pathway that includes the middle steps of the pathway (PubMed:1645230). ERG12 converts mevalonate into 5-phosphomevalonate (PubMed:1645230). The second module is carried out in the vacuole and involves the formation of farnesyl diphosphate, which is also an important intermediate in the biosynthesis of ubiquinone, dolichol, heme and prenylated proteins. Activity by the mevalonate kinase ERG12 first converts mevalonate into 5-phosphomevalonate. 5-phosphomevalonate is then further converted to 5-diphosphomevalonate by the phosphomevalonate kinase ERG8. The diphosphomevalonate decarboxylase MVD1/ERG19 then produces isopentenyl diphosphate. The isopentenyl-diphosphate delta-isomerase IDI1 then catalyzes the 1,3-allylic rearrangement of the homoallylic substrate isopentenyl (IPP) to its highly electrophilic allylic isomer, dimethylallyl diphosphate (DMAPP). Finally the farnesyl diphosphate synthase ERG20 catalyzes the sequential condensation of isopentenyl pyrophosphate with dimethylallyl pyrophosphate, and then with the resultant geranylpyrophosphate to the ultimate product farnesyl pyrophosphate (PubMed:32679672).</text>
</comment>
<comment type="catalytic activity">
    <reaction evidence="4">
        <text>(R)-mevalonate + ATP = (R)-5-phosphomevalonate + ADP + H(+)</text>
        <dbReference type="Rhea" id="RHEA:17065"/>
        <dbReference type="ChEBI" id="CHEBI:15378"/>
        <dbReference type="ChEBI" id="CHEBI:30616"/>
        <dbReference type="ChEBI" id="CHEBI:36464"/>
        <dbReference type="ChEBI" id="CHEBI:58146"/>
        <dbReference type="ChEBI" id="CHEBI:456216"/>
        <dbReference type="EC" id="2.7.1.36"/>
    </reaction>
    <physiologicalReaction direction="left-to-right" evidence="4">
        <dbReference type="Rhea" id="RHEA:17066"/>
    </physiologicalReaction>
</comment>
<comment type="cofactor">
    <cofactor evidence="1">
        <name>Mg(2+)</name>
        <dbReference type="ChEBI" id="CHEBI:18420"/>
    </cofactor>
</comment>
<comment type="activity regulation">
    <text evidence="4">Farnesyl pyrophosphate and geranyl pyrophosphate inhibit mevalonate kinase by binding competitively at the ATP-binding site.</text>
</comment>
<comment type="biophysicochemical properties">
    <kinetics>
        <KM evidence="4">0.13 mM for mevalonate</KM>
        <Vmax evidence="4">27.0 nmol/min/mg enzyme</Vmax>
    </kinetics>
</comment>
<comment type="pathway">
    <text evidence="4">Isoprenoid biosynthesis; isopentenyl diphosphate biosynthesis via mevalonate pathway; isopentenyl diphosphate from (R)-mevalonate: step 1/3.</text>
</comment>
<comment type="subunit">
    <text evidence="1">Homodimer.</text>
</comment>
<comment type="subcellular location">
    <subcellularLocation>
        <location evidence="9">Cytoplasm</location>
        <location evidence="9">Cytosol</location>
    </subcellularLocation>
</comment>
<comment type="miscellaneous">
    <text evidence="3">Present with 3300 molecules/cell in log phase SD medium.</text>
</comment>
<comment type="similarity">
    <text evidence="8">Belongs to the GHMP kinase family. Mevalonate kinase subfamily.</text>
</comment>
<reference key="1">
    <citation type="journal article" date="1987" name="Mol. Gen. Genet.">
        <title>Mutations that increase the mitotic stability of minichromosomes in yeast: characterization of RAR1.</title>
        <authorList>
            <person name="Kearsey S.E."/>
            <person name="Edwards J."/>
        </authorList>
    </citation>
    <scope>NUCLEOTIDE SEQUENCE [GENOMIC DNA]</scope>
</reference>
<reference key="2">
    <citation type="journal article" date="1991" name="Curr. Genet.">
        <title>Nucleotide sequence of the ERG12 gene of Saccharomyces cerevisiae encoding mevalonate kinase.</title>
        <authorList>
            <person name="Oulmouden A."/>
            <person name="Karst F."/>
        </authorList>
    </citation>
    <scope>NUCLEOTIDE SEQUENCE [GENOMIC DNA]</scope>
    <scope>FUNCTION</scope>
    <scope>CATALYTIC ACTIVITY</scope>
    <scope>BIOPHYSICOCHEMICAL PROPERTIES</scope>
    <scope>ACTIVITY REGULATION</scope>
    <scope>PATHWAY</scope>
</reference>
<reference key="3">
    <citation type="journal article" date="1997" name="Nature">
        <title>The nucleotide sequence of Saccharomyces cerevisiae chromosome XIII.</title>
        <authorList>
            <person name="Bowman S."/>
            <person name="Churcher C.M."/>
            <person name="Badcock K."/>
            <person name="Brown D."/>
            <person name="Chillingworth T."/>
            <person name="Connor R."/>
            <person name="Dedman K."/>
            <person name="Devlin K."/>
            <person name="Gentles S."/>
            <person name="Hamlin N."/>
            <person name="Hunt S."/>
            <person name="Jagels K."/>
            <person name="Lye G."/>
            <person name="Moule S."/>
            <person name="Odell C."/>
            <person name="Pearson D."/>
            <person name="Rajandream M.A."/>
            <person name="Rice P."/>
            <person name="Skelton J."/>
            <person name="Walsh S.V."/>
            <person name="Whitehead S."/>
            <person name="Barrell B.G."/>
        </authorList>
    </citation>
    <scope>NUCLEOTIDE SEQUENCE [LARGE SCALE GENOMIC DNA]</scope>
    <source>
        <strain>ATCC 204508 / S288c</strain>
    </source>
</reference>
<reference key="4">
    <citation type="journal article" date="2014" name="G3 (Bethesda)">
        <title>The reference genome sequence of Saccharomyces cerevisiae: Then and now.</title>
        <authorList>
            <person name="Engel S.R."/>
            <person name="Dietrich F.S."/>
            <person name="Fisk D.G."/>
            <person name="Binkley G."/>
            <person name="Balakrishnan R."/>
            <person name="Costanzo M.C."/>
            <person name="Dwight S.S."/>
            <person name="Hitz B.C."/>
            <person name="Karra K."/>
            <person name="Nash R.S."/>
            <person name="Weng S."/>
            <person name="Wong E.D."/>
            <person name="Lloyd P."/>
            <person name="Skrzypek M.S."/>
            <person name="Miyasato S.R."/>
            <person name="Simison M."/>
            <person name="Cherry J.M."/>
        </authorList>
    </citation>
    <scope>GENOME REANNOTATION</scope>
    <source>
        <strain>ATCC 204508 / S288c</strain>
    </source>
</reference>
<reference key="5">
    <citation type="submission" date="1995-10" db="EMBL/GenBank/DDBJ databases">
        <authorList>
            <person name="Saito A."/>
            <person name="Kazuta Y."/>
            <person name="Kondo H."/>
            <person name="Tanabe T."/>
        </authorList>
    </citation>
    <scope>NUCLEOTIDE SEQUENCE [GENOMIC DNA] OF 1-246</scope>
    <source>
        <strain>SP1</strain>
    </source>
</reference>
<reference key="6">
    <citation type="journal article" date="2003" name="Nature">
        <title>Global analysis of protein expression in yeast.</title>
        <authorList>
            <person name="Ghaemmaghami S."/>
            <person name="Huh W.-K."/>
            <person name="Bower K."/>
            <person name="Howson R.W."/>
            <person name="Belle A."/>
            <person name="Dephoure N."/>
            <person name="O'Shea E.K."/>
            <person name="Weissman J.S."/>
        </authorList>
    </citation>
    <scope>LEVEL OF PROTEIN EXPRESSION [LARGE SCALE ANALYSIS]</scope>
</reference>
<reference key="7">
    <citation type="journal article" date="2020" name="Genes (Basel)">
        <title>Regulation of ergosterol biosynthesis in Saccharomyces cerevisiae.</title>
        <authorList>
            <person name="Jorda T."/>
            <person name="Puig S."/>
        </authorList>
    </citation>
    <scope>REVIEW ON ERGOSTEROL BIOSYNTHESIS</scope>
</reference>
<keyword id="KW-0067">ATP-binding</keyword>
<keyword id="KW-0963">Cytoplasm</keyword>
<keyword id="KW-0418">Kinase</keyword>
<keyword id="KW-0444">Lipid biosynthesis</keyword>
<keyword id="KW-0443">Lipid metabolism</keyword>
<keyword id="KW-0460">Magnesium</keyword>
<keyword id="KW-0479">Metal-binding</keyword>
<keyword id="KW-0547">Nucleotide-binding</keyword>
<keyword id="KW-1185">Reference proteome</keyword>
<keyword id="KW-0752">Steroid biosynthesis</keyword>
<keyword id="KW-0753">Steroid metabolism</keyword>
<keyword id="KW-0756">Sterol biosynthesis</keyword>
<keyword id="KW-1207">Sterol metabolism</keyword>
<keyword id="KW-0808">Transferase</keyword>
<sequence length="443" mass="48460">MSLPFLTSAPGKVIIFGEHSAVYNKPAVAASVSALRTYLLISESSAPDTIELDFPDISFNHKWSINDFNAITEDQVNSQKLAKAQQATDGLSQELVSLLDPLLAQLSESFHYHAAFCFLYMFVCLCPHAKNIKFSLKSTLPIGAGLGSSASISVSLALAMAYLGGLIGSNDLEKLSENDKHIVNQWAFIGEKCIHGTPSGIDNAVATYGNALLFEKDSHNGTINTNNFKFLDDFPAIPMILTYTRIPRSTKDLVARVRVLVTEKFPEVMKPILDAMGECALQGLEIMTKLSKCKGTDDEAVETNNELYEQLLELIRINHGLLVSIGVSHPGLELIKNLSDDLRIGSTKLTGAGGGGCSLTLLRRDITQEQIDSFKKKLQDDFSYETFETDLGGTGCCLLSAKNLNKDLKIKSLVFQLFENKTTTKQQIDDLLLPGNTNLPWTS</sequence>
<gene>
    <name evidence="5" type="primary">ERG12</name>
    <name evidence="7" type="synonym">RAR1</name>
    <name type="ordered locus">YMR208W</name>
    <name type="ORF">YM8261.02</name>
</gene>
<name>ERG12_YEAST</name>
<feature type="chain" id="PRO_0000156662" description="Mevalonate kinase">
    <location>
        <begin position="1"/>
        <end position="443"/>
    </location>
</feature>
<feature type="active site" description="Proton acceptor" evidence="2">
    <location>
        <position position="202"/>
    </location>
</feature>
<feature type="binding site" evidence="1">
    <location>
        <position position="12"/>
    </location>
    <ligand>
        <name>ATP</name>
        <dbReference type="ChEBI" id="CHEBI:30616"/>
    </ligand>
</feature>
<feature type="binding site" evidence="1">
    <location>
        <position position="138"/>
    </location>
    <ligand>
        <name>ATP</name>
        <dbReference type="ChEBI" id="CHEBI:30616"/>
    </ligand>
</feature>
<feature type="binding site" evidence="1">
    <location>
        <begin position="143"/>
        <end position="149"/>
    </location>
    <ligand>
        <name>ATP</name>
        <dbReference type="ChEBI" id="CHEBI:30616"/>
    </ligand>
</feature>
<feature type="binding site" evidence="1">
    <location>
        <position position="149"/>
    </location>
    <ligand>
        <name>Mg(2+)</name>
        <dbReference type="ChEBI" id="CHEBI:18420"/>
    </ligand>
</feature>
<feature type="binding site" evidence="1">
    <location>
        <position position="191"/>
    </location>
    <ligand>
        <name>Mg(2+)</name>
        <dbReference type="ChEBI" id="CHEBI:18420"/>
    </ligand>
</feature>
<accession>P07277</accession>
<accession>D6W033</accession>
<proteinExistence type="evidence at protein level"/>